<keyword id="KW-0963">Cytoplasm</keyword>
<keyword id="KW-0238">DNA-binding</keyword>
<keyword id="KW-0597">Phosphoprotein</keyword>
<keyword id="KW-1185">Reference proteome</keyword>
<keyword id="KW-0346">Stress response</keyword>
<keyword id="KW-0804">Transcription</keyword>
<keyword id="KW-0805">Transcription regulation</keyword>
<keyword id="KW-0902">Two-component regulatory system</keyword>
<keyword id="KW-0843">Virulence</keyword>
<comment type="function">
    <text evidence="1">Member of the two-component regulatory system MprB/MprA which contributes to maintaining a balance among several systems involved in stress resistance and is required for establishment and maintenance of persistent infection in the host. Functions as a transcriptional regulator that recognizes a 19-bp nucleotide motif comprizing two loosely conserved 8-bp direct DNA-binding motif repeats separated by a 3-bp spacer region (By similarity).</text>
</comment>
<comment type="subcellular location">
    <subcellularLocation>
        <location evidence="4">Cytoplasm</location>
    </subcellularLocation>
</comment>
<comment type="PTM">
    <text evidence="1">Phosphorylated and dephosphorylated by MprB.</text>
</comment>
<comment type="sequence caution" evidence="4">
    <conflict type="erroneous initiation">
        <sequence resource="EMBL-CDS" id="CAB36688"/>
    </conflict>
</comment>
<reference key="1">
    <citation type="journal article" date="2001" name="Nature">
        <title>Massive gene decay in the leprosy bacillus.</title>
        <authorList>
            <person name="Cole S.T."/>
            <person name="Eiglmeier K."/>
            <person name="Parkhill J."/>
            <person name="James K.D."/>
            <person name="Thomson N.R."/>
            <person name="Wheeler P.R."/>
            <person name="Honore N."/>
            <person name="Garnier T."/>
            <person name="Churcher C.M."/>
            <person name="Harris D.E."/>
            <person name="Mungall K.L."/>
            <person name="Basham D."/>
            <person name="Brown D."/>
            <person name="Chillingworth T."/>
            <person name="Connor R."/>
            <person name="Davies R.M."/>
            <person name="Devlin K."/>
            <person name="Duthoy S."/>
            <person name="Feltwell T."/>
            <person name="Fraser A."/>
            <person name="Hamlin N."/>
            <person name="Holroyd S."/>
            <person name="Hornsby T."/>
            <person name="Jagels K."/>
            <person name="Lacroix C."/>
            <person name="Maclean J."/>
            <person name="Moule S."/>
            <person name="Murphy L.D."/>
            <person name="Oliver K."/>
            <person name="Quail M.A."/>
            <person name="Rajandream M.A."/>
            <person name="Rutherford K.M."/>
            <person name="Rutter S."/>
            <person name="Seeger K."/>
            <person name="Simon S."/>
            <person name="Simmonds M."/>
            <person name="Skelton J."/>
            <person name="Squares R."/>
            <person name="Squares S."/>
            <person name="Stevens K."/>
            <person name="Taylor K."/>
            <person name="Whitehead S."/>
            <person name="Woodward J.R."/>
            <person name="Barrell B.G."/>
        </authorList>
    </citation>
    <scope>NUCLEOTIDE SEQUENCE [LARGE SCALE GENOMIC DNA]</scope>
    <source>
        <strain>TN</strain>
    </source>
</reference>
<accession>Q9CD68</accession>
<accession>Q9Z5G8</accession>
<evidence type="ECO:0000250" key="1"/>
<evidence type="ECO:0000255" key="2">
    <source>
        <dbReference type="PROSITE-ProRule" id="PRU00169"/>
    </source>
</evidence>
<evidence type="ECO:0000255" key="3">
    <source>
        <dbReference type="PROSITE-ProRule" id="PRU01091"/>
    </source>
</evidence>
<evidence type="ECO:0000305" key="4"/>
<gene>
    <name type="primary">mprA</name>
    <name type="ordered locus">ML0174</name>
    <name type="ORF">MLCB373.26</name>
</gene>
<feature type="chain" id="PRO_0000308421" description="Response regulator MprA">
    <location>
        <begin position="1"/>
        <end position="228"/>
    </location>
</feature>
<feature type="domain" description="Response regulatory" evidence="2">
    <location>
        <begin position="2"/>
        <end position="116"/>
    </location>
</feature>
<feature type="DNA-binding region" description="OmpR/PhoB-type" evidence="3">
    <location>
        <begin position="127"/>
        <end position="225"/>
    </location>
</feature>
<feature type="modified residue" description="4-aspartylphosphate" evidence="2">
    <location>
        <position position="46"/>
    </location>
</feature>
<proteinExistence type="inferred from homology"/>
<sequence length="228" mass="25599">MRILAVDDDRAVRESLRRSLSFNGYSVELANDGVEALEMVARDRPDALVLDVMMPRLDGLEVCRQLRSTGDDLPILVLTARDSVSERVAGLDAGADDYLPKPFALEELLARIRALLRRTKPDDAAESVAMSFSDLTLDPVTREVARGQRWISLTRTEFALLEMLIANPRRVLTRSRILEEVWGFDFPTSGNALEVYVGYLRRKTEADGESRLIHTVRGVGYVLRETPP</sequence>
<name>MPRA_MYCLE</name>
<protein>
    <recommendedName>
        <fullName>Response regulator MprA</fullName>
    </recommendedName>
    <alternativeName>
        <fullName>Mycobacterial persistence regulator A</fullName>
    </alternativeName>
</protein>
<organism>
    <name type="scientific">Mycobacterium leprae (strain TN)</name>
    <dbReference type="NCBI Taxonomy" id="272631"/>
    <lineage>
        <taxon>Bacteria</taxon>
        <taxon>Bacillati</taxon>
        <taxon>Actinomycetota</taxon>
        <taxon>Actinomycetes</taxon>
        <taxon>Mycobacteriales</taxon>
        <taxon>Mycobacteriaceae</taxon>
        <taxon>Mycobacterium</taxon>
    </lineage>
</organism>
<dbReference type="EMBL" id="AL035500">
    <property type="protein sequence ID" value="CAB36688.1"/>
    <property type="status" value="ALT_INIT"/>
    <property type="molecule type" value="Genomic_DNA"/>
</dbReference>
<dbReference type="EMBL" id="AL583917">
    <property type="protein sequence ID" value="CAC29682.1"/>
    <property type="molecule type" value="Genomic_DNA"/>
</dbReference>
<dbReference type="PIR" id="F86930">
    <property type="entry name" value="F86930"/>
</dbReference>
<dbReference type="PIR" id="T45446">
    <property type="entry name" value="T45446"/>
</dbReference>
<dbReference type="RefSeq" id="NP_301250.1">
    <property type="nucleotide sequence ID" value="NC_002677.1"/>
</dbReference>
<dbReference type="RefSeq" id="WP_010907575.1">
    <property type="nucleotide sequence ID" value="NC_002677.1"/>
</dbReference>
<dbReference type="SMR" id="Q9CD68"/>
<dbReference type="STRING" id="272631.gene:17573989"/>
<dbReference type="KEGG" id="mle:ML0174"/>
<dbReference type="PATRIC" id="fig|272631.5.peg.279"/>
<dbReference type="Leproma" id="ML0174"/>
<dbReference type="eggNOG" id="COG0745">
    <property type="taxonomic scope" value="Bacteria"/>
</dbReference>
<dbReference type="HOGENOM" id="CLU_000445_30_1_11"/>
<dbReference type="OrthoDB" id="4760923at2"/>
<dbReference type="Proteomes" id="UP000000806">
    <property type="component" value="Chromosome"/>
</dbReference>
<dbReference type="GO" id="GO:0005829">
    <property type="term" value="C:cytosol"/>
    <property type="evidence" value="ECO:0007669"/>
    <property type="project" value="TreeGrafter"/>
</dbReference>
<dbReference type="GO" id="GO:0032993">
    <property type="term" value="C:protein-DNA complex"/>
    <property type="evidence" value="ECO:0007669"/>
    <property type="project" value="TreeGrafter"/>
</dbReference>
<dbReference type="GO" id="GO:0000156">
    <property type="term" value="F:phosphorelay response regulator activity"/>
    <property type="evidence" value="ECO:0007669"/>
    <property type="project" value="TreeGrafter"/>
</dbReference>
<dbReference type="GO" id="GO:0000976">
    <property type="term" value="F:transcription cis-regulatory region binding"/>
    <property type="evidence" value="ECO:0007669"/>
    <property type="project" value="TreeGrafter"/>
</dbReference>
<dbReference type="GO" id="GO:0006355">
    <property type="term" value="P:regulation of DNA-templated transcription"/>
    <property type="evidence" value="ECO:0007669"/>
    <property type="project" value="InterPro"/>
</dbReference>
<dbReference type="CDD" id="cd17627">
    <property type="entry name" value="REC_OmpR_PrrA-like"/>
    <property type="match status" value="1"/>
</dbReference>
<dbReference type="CDD" id="cd00383">
    <property type="entry name" value="trans_reg_C"/>
    <property type="match status" value="1"/>
</dbReference>
<dbReference type="FunFam" id="3.40.50.2300:FF:000001">
    <property type="entry name" value="DNA-binding response regulator PhoB"/>
    <property type="match status" value="1"/>
</dbReference>
<dbReference type="FunFam" id="1.10.10.10:FF:000005">
    <property type="entry name" value="Two-component system response regulator"/>
    <property type="match status" value="1"/>
</dbReference>
<dbReference type="Gene3D" id="3.40.50.2300">
    <property type="match status" value="1"/>
</dbReference>
<dbReference type="Gene3D" id="6.10.250.690">
    <property type="match status" value="1"/>
</dbReference>
<dbReference type="Gene3D" id="1.10.10.10">
    <property type="entry name" value="Winged helix-like DNA-binding domain superfamily/Winged helix DNA-binding domain"/>
    <property type="match status" value="1"/>
</dbReference>
<dbReference type="InterPro" id="IPR011006">
    <property type="entry name" value="CheY-like_superfamily"/>
</dbReference>
<dbReference type="InterPro" id="IPR001867">
    <property type="entry name" value="OmpR/PhoB-type_DNA-bd"/>
</dbReference>
<dbReference type="InterPro" id="IPR001789">
    <property type="entry name" value="Sig_transdc_resp-reg_receiver"/>
</dbReference>
<dbReference type="InterPro" id="IPR039420">
    <property type="entry name" value="WalR-like"/>
</dbReference>
<dbReference type="InterPro" id="IPR036388">
    <property type="entry name" value="WH-like_DNA-bd_sf"/>
</dbReference>
<dbReference type="PANTHER" id="PTHR48111">
    <property type="entry name" value="REGULATOR OF RPOS"/>
    <property type="match status" value="1"/>
</dbReference>
<dbReference type="PANTHER" id="PTHR48111:SF22">
    <property type="entry name" value="REGULATOR OF RPOS"/>
    <property type="match status" value="1"/>
</dbReference>
<dbReference type="Pfam" id="PF00072">
    <property type="entry name" value="Response_reg"/>
    <property type="match status" value="1"/>
</dbReference>
<dbReference type="Pfam" id="PF00486">
    <property type="entry name" value="Trans_reg_C"/>
    <property type="match status" value="1"/>
</dbReference>
<dbReference type="SMART" id="SM00448">
    <property type="entry name" value="REC"/>
    <property type="match status" value="1"/>
</dbReference>
<dbReference type="SMART" id="SM00862">
    <property type="entry name" value="Trans_reg_C"/>
    <property type="match status" value="1"/>
</dbReference>
<dbReference type="SUPFAM" id="SSF52172">
    <property type="entry name" value="CheY-like"/>
    <property type="match status" value="1"/>
</dbReference>
<dbReference type="PROSITE" id="PS51755">
    <property type="entry name" value="OMPR_PHOB"/>
    <property type="match status" value="1"/>
</dbReference>
<dbReference type="PROSITE" id="PS50110">
    <property type="entry name" value="RESPONSE_REGULATORY"/>
    <property type="match status" value="1"/>
</dbReference>